<evidence type="ECO:0000255" key="1">
    <source>
        <dbReference type="HAMAP-Rule" id="MF_00300"/>
    </source>
</evidence>
<evidence type="ECO:0000256" key="2">
    <source>
        <dbReference type="SAM" id="MobiDB-lite"/>
    </source>
</evidence>
<proteinExistence type="inferred from homology"/>
<reference key="1">
    <citation type="journal article" date="2003" name="Nature">
        <title>The genome sequence of Bacillus anthracis Ames and comparison to closely related bacteria.</title>
        <authorList>
            <person name="Read T.D."/>
            <person name="Peterson S.N."/>
            <person name="Tourasse N.J."/>
            <person name="Baillie L.W."/>
            <person name="Paulsen I.T."/>
            <person name="Nelson K.E."/>
            <person name="Tettelin H."/>
            <person name="Fouts D.E."/>
            <person name="Eisen J.A."/>
            <person name="Gill S.R."/>
            <person name="Holtzapple E.K."/>
            <person name="Okstad O.A."/>
            <person name="Helgason E."/>
            <person name="Rilstone J."/>
            <person name="Wu M."/>
            <person name="Kolonay J.F."/>
            <person name="Beanan M.J."/>
            <person name="Dodson R.J."/>
            <person name="Brinkac L.M."/>
            <person name="Gwinn M.L."/>
            <person name="DeBoy R.T."/>
            <person name="Madpu R."/>
            <person name="Daugherty S.C."/>
            <person name="Durkin A.S."/>
            <person name="Haft D.H."/>
            <person name="Nelson W.C."/>
            <person name="Peterson J.D."/>
            <person name="Pop M."/>
            <person name="Khouri H.M."/>
            <person name="Radune D."/>
            <person name="Benton J.L."/>
            <person name="Mahamoud Y."/>
            <person name="Jiang L."/>
            <person name="Hance I.R."/>
            <person name="Weidman J.F."/>
            <person name="Berry K.J."/>
            <person name="Plaut R.D."/>
            <person name="Wolf A.M."/>
            <person name="Watkins K.L."/>
            <person name="Nierman W.C."/>
            <person name="Hazen A."/>
            <person name="Cline R.T."/>
            <person name="Redmond C."/>
            <person name="Thwaite J.E."/>
            <person name="White O."/>
            <person name="Salzberg S.L."/>
            <person name="Thomason B."/>
            <person name="Friedlander A.M."/>
            <person name="Koehler T.M."/>
            <person name="Hanna P.C."/>
            <person name="Kolstoe A.-B."/>
            <person name="Fraser C.M."/>
        </authorList>
    </citation>
    <scope>NUCLEOTIDE SEQUENCE [LARGE SCALE GENOMIC DNA]</scope>
    <source>
        <strain>Ames / isolate Porton</strain>
    </source>
</reference>
<reference key="2">
    <citation type="journal article" date="2009" name="J. Bacteriol.">
        <title>The complete genome sequence of Bacillus anthracis Ames 'Ancestor'.</title>
        <authorList>
            <person name="Ravel J."/>
            <person name="Jiang L."/>
            <person name="Stanley S.T."/>
            <person name="Wilson M.R."/>
            <person name="Decker R.S."/>
            <person name="Read T.D."/>
            <person name="Worsham P."/>
            <person name="Keim P.S."/>
            <person name="Salzberg S.L."/>
            <person name="Fraser-Liggett C.M."/>
            <person name="Rasko D.A."/>
        </authorList>
    </citation>
    <scope>NUCLEOTIDE SEQUENCE [LARGE SCALE GENOMIC DNA]</scope>
    <source>
        <strain>Ames ancestor</strain>
    </source>
</reference>
<reference key="3">
    <citation type="submission" date="2004-01" db="EMBL/GenBank/DDBJ databases">
        <title>Complete genome sequence of Bacillus anthracis Sterne.</title>
        <authorList>
            <person name="Brettin T.S."/>
            <person name="Bruce D."/>
            <person name="Challacombe J.F."/>
            <person name="Gilna P."/>
            <person name="Han C."/>
            <person name="Hill K."/>
            <person name="Hitchcock P."/>
            <person name="Jackson P."/>
            <person name="Keim P."/>
            <person name="Longmire J."/>
            <person name="Lucas S."/>
            <person name="Okinaka R."/>
            <person name="Richardson P."/>
            <person name="Rubin E."/>
            <person name="Tice H."/>
        </authorList>
    </citation>
    <scope>NUCLEOTIDE SEQUENCE [LARGE SCALE GENOMIC DNA]</scope>
    <source>
        <strain>Sterne</strain>
    </source>
</reference>
<organism>
    <name type="scientific">Bacillus anthracis</name>
    <dbReference type="NCBI Taxonomy" id="1392"/>
    <lineage>
        <taxon>Bacteria</taxon>
        <taxon>Bacillati</taxon>
        <taxon>Bacillota</taxon>
        <taxon>Bacilli</taxon>
        <taxon>Bacillales</taxon>
        <taxon>Bacillaceae</taxon>
        <taxon>Bacillus</taxon>
        <taxon>Bacillus cereus group</taxon>
    </lineage>
</organism>
<keyword id="KW-0028">Amino-acid biosynthesis</keyword>
<keyword id="KW-0057">Aromatic amino acid biosynthesis</keyword>
<keyword id="KW-0274">FAD</keyword>
<keyword id="KW-0285">Flavoprotein</keyword>
<keyword id="KW-0288">FMN</keyword>
<keyword id="KW-0456">Lyase</keyword>
<keyword id="KW-0521">NADP</keyword>
<keyword id="KW-1185">Reference proteome</keyword>
<accession>Q81SV7</accession>
<accession>Q6I136</accession>
<accession>Q6KUZ0</accession>
<dbReference type="EC" id="4.2.3.5" evidence="1"/>
<dbReference type="EMBL" id="AE016879">
    <property type="protein sequence ID" value="AAP25474.1"/>
    <property type="molecule type" value="Genomic_DNA"/>
</dbReference>
<dbReference type="EMBL" id="AE017334">
    <property type="protein sequence ID" value="AAT30635.1"/>
    <property type="molecule type" value="Genomic_DNA"/>
</dbReference>
<dbReference type="EMBL" id="AE017225">
    <property type="protein sequence ID" value="AAT53746.1"/>
    <property type="molecule type" value="Genomic_DNA"/>
</dbReference>
<dbReference type="RefSeq" id="NP_843988.1">
    <property type="nucleotide sequence ID" value="NC_003997.3"/>
</dbReference>
<dbReference type="RefSeq" id="YP_027695.1">
    <property type="nucleotide sequence ID" value="NC_005945.1"/>
</dbReference>
<dbReference type="SMR" id="Q81SV7"/>
<dbReference type="STRING" id="261594.GBAA_1537"/>
<dbReference type="DNASU" id="1087360"/>
<dbReference type="GeneID" id="45021511"/>
<dbReference type="KEGG" id="ban:BA_1537"/>
<dbReference type="KEGG" id="bar:GBAA_1537"/>
<dbReference type="KEGG" id="bat:BAS1426"/>
<dbReference type="PATRIC" id="fig|198094.11.peg.1509"/>
<dbReference type="eggNOG" id="COG0082">
    <property type="taxonomic scope" value="Bacteria"/>
</dbReference>
<dbReference type="HOGENOM" id="CLU_034547_2_0_9"/>
<dbReference type="OMA" id="MLSINAV"/>
<dbReference type="OrthoDB" id="9771806at2"/>
<dbReference type="UniPathway" id="UPA00053">
    <property type="reaction ID" value="UER00090"/>
</dbReference>
<dbReference type="Proteomes" id="UP000000427">
    <property type="component" value="Chromosome"/>
</dbReference>
<dbReference type="Proteomes" id="UP000000594">
    <property type="component" value="Chromosome"/>
</dbReference>
<dbReference type="GO" id="GO:0005829">
    <property type="term" value="C:cytosol"/>
    <property type="evidence" value="ECO:0007669"/>
    <property type="project" value="TreeGrafter"/>
</dbReference>
<dbReference type="GO" id="GO:0004107">
    <property type="term" value="F:chorismate synthase activity"/>
    <property type="evidence" value="ECO:0007669"/>
    <property type="project" value="UniProtKB-UniRule"/>
</dbReference>
<dbReference type="GO" id="GO:0010181">
    <property type="term" value="F:FMN binding"/>
    <property type="evidence" value="ECO:0007669"/>
    <property type="project" value="TreeGrafter"/>
</dbReference>
<dbReference type="GO" id="GO:0008652">
    <property type="term" value="P:amino acid biosynthetic process"/>
    <property type="evidence" value="ECO:0007669"/>
    <property type="project" value="UniProtKB-KW"/>
</dbReference>
<dbReference type="GO" id="GO:0009073">
    <property type="term" value="P:aromatic amino acid family biosynthetic process"/>
    <property type="evidence" value="ECO:0007669"/>
    <property type="project" value="UniProtKB-KW"/>
</dbReference>
<dbReference type="GO" id="GO:0009423">
    <property type="term" value="P:chorismate biosynthetic process"/>
    <property type="evidence" value="ECO:0007669"/>
    <property type="project" value="UniProtKB-UniRule"/>
</dbReference>
<dbReference type="CDD" id="cd07304">
    <property type="entry name" value="Chorismate_synthase"/>
    <property type="match status" value="1"/>
</dbReference>
<dbReference type="FunFam" id="3.60.150.10:FF:000002">
    <property type="entry name" value="Chorismate synthase"/>
    <property type="match status" value="1"/>
</dbReference>
<dbReference type="Gene3D" id="3.60.150.10">
    <property type="entry name" value="Chorismate synthase AroC"/>
    <property type="match status" value="1"/>
</dbReference>
<dbReference type="HAMAP" id="MF_00300">
    <property type="entry name" value="Chorismate_synth"/>
    <property type="match status" value="1"/>
</dbReference>
<dbReference type="InterPro" id="IPR000453">
    <property type="entry name" value="Chorismate_synth"/>
</dbReference>
<dbReference type="InterPro" id="IPR035904">
    <property type="entry name" value="Chorismate_synth_AroC_sf"/>
</dbReference>
<dbReference type="InterPro" id="IPR020541">
    <property type="entry name" value="Chorismate_synthase_CS"/>
</dbReference>
<dbReference type="NCBIfam" id="TIGR00033">
    <property type="entry name" value="aroC"/>
    <property type="match status" value="1"/>
</dbReference>
<dbReference type="NCBIfam" id="NF003793">
    <property type="entry name" value="PRK05382.1"/>
    <property type="match status" value="1"/>
</dbReference>
<dbReference type="PANTHER" id="PTHR21085">
    <property type="entry name" value="CHORISMATE SYNTHASE"/>
    <property type="match status" value="1"/>
</dbReference>
<dbReference type="PANTHER" id="PTHR21085:SF0">
    <property type="entry name" value="CHORISMATE SYNTHASE"/>
    <property type="match status" value="1"/>
</dbReference>
<dbReference type="Pfam" id="PF01264">
    <property type="entry name" value="Chorismate_synt"/>
    <property type="match status" value="1"/>
</dbReference>
<dbReference type="PIRSF" id="PIRSF001456">
    <property type="entry name" value="Chorismate_synth"/>
    <property type="match status" value="1"/>
</dbReference>
<dbReference type="SUPFAM" id="SSF103263">
    <property type="entry name" value="Chorismate synthase, AroC"/>
    <property type="match status" value="1"/>
</dbReference>
<dbReference type="PROSITE" id="PS00787">
    <property type="entry name" value="CHORISMATE_SYNTHASE_1"/>
    <property type="match status" value="1"/>
</dbReference>
<dbReference type="PROSITE" id="PS00788">
    <property type="entry name" value="CHORISMATE_SYNTHASE_2"/>
    <property type="match status" value="1"/>
</dbReference>
<dbReference type="PROSITE" id="PS00789">
    <property type="entry name" value="CHORISMATE_SYNTHASE_3"/>
    <property type="match status" value="1"/>
</dbReference>
<feature type="chain" id="PRO_0000140539" description="Chorismate synthase 2">
    <location>
        <begin position="1"/>
        <end position="390"/>
    </location>
</feature>
<feature type="region of interest" description="Disordered" evidence="2">
    <location>
        <begin position="95"/>
        <end position="117"/>
    </location>
</feature>
<feature type="binding site" evidence="1">
    <location>
        <position position="39"/>
    </location>
    <ligand>
        <name>NADP(+)</name>
        <dbReference type="ChEBI" id="CHEBI:58349"/>
    </ligand>
</feature>
<feature type="binding site" evidence="1">
    <location>
        <position position="45"/>
    </location>
    <ligand>
        <name>NADP(+)</name>
        <dbReference type="ChEBI" id="CHEBI:58349"/>
    </ligand>
</feature>
<feature type="binding site" evidence="1">
    <location>
        <begin position="132"/>
        <end position="134"/>
    </location>
    <ligand>
        <name>FMN</name>
        <dbReference type="ChEBI" id="CHEBI:58210"/>
    </ligand>
</feature>
<feature type="binding site" evidence="1">
    <location>
        <begin position="253"/>
        <end position="254"/>
    </location>
    <ligand>
        <name>FMN</name>
        <dbReference type="ChEBI" id="CHEBI:58210"/>
    </ligand>
</feature>
<feature type="binding site" evidence="1">
    <location>
        <position position="298"/>
    </location>
    <ligand>
        <name>FMN</name>
        <dbReference type="ChEBI" id="CHEBI:58210"/>
    </ligand>
</feature>
<feature type="binding site" evidence="1">
    <location>
        <begin position="313"/>
        <end position="317"/>
    </location>
    <ligand>
        <name>FMN</name>
        <dbReference type="ChEBI" id="CHEBI:58210"/>
    </ligand>
</feature>
<feature type="binding site" evidence="1">
    <location>
        <position position="339"/>
    </location>
    <ligand>
        <name>FMN</name>
        <dbReference type="ChEBI" id="CHEBI:58210"/>
    </ligand>
</feature>
<gene>
    <name evidence="1" type="primary">aroC2</name>
    <name evidence="1" type="synonym">aroC1</name>
    <name type="ordered locus">BA_1537</name>
    <name type="ordered locus">GBAA_1537</name>
    <name type="ordered locus">BAS1426</name>
</gene>
<sequence>MRYITAGESHGPQLTTIIEGVPAGLPLVADDINEELARRQKGYGRGRRMQIETDQVQIVSGVRHGETLGSPIALVVENRDFAHWTKIMGAEPLTEQEEKEMKRKVTKPRPGHADLNGAIKYGHRDMRNVLERSSARETTVRVAAGAVAKKVLAELGITVAGHVIEIGGVEAKETTYRSIEELKSITEASPVRCLDEEAGNQMIKAIDDAKSNGDSIGGIVEVIVEGMPIGVGSYVHYDRKLDAKLAAAIMSINAFKGVEIGIGFEAAHRPGSEVHDEILWNEEHGYTRRTNNAGGLEGGMTTGMPIVVRGVMKPIPTLYKPLQSVDIDTKEPFTASIERSDSCAVPAASVVAEAVVAWELATALIEQFGLDRMDLIRENIEKHNEYARGF</sequence>
<comment type="function">
    <text evidence="1">Catalyzes the anti-1,4-elimination of the C-3 phosphate and the C-6 proR hydrogen from 5-enolpyruvylshikimate-3-phosphate (EPSP) to yield chorismate, which is the branch point compound that serves as the starting substrate for the three terminal pathways of aromatic amino acid biosynthesis. This reaction introduces a second double bond into the aromatic ring system.</text>
</comment>
<comment type="catalytic activity">
    <reaction evidence="1">
        <text>5-O-(1-carboxyvinyl)-3-phosphoshikimate = chorismate + phosphate</text>
        <dbReference type="Rhea" id="RHEA:21020"/>
        <dbReference type="ChEBI" id="CHEBI:29748"/>
        <dbReference type="ChEBI" id="CHEBI:43474"/>
        <dbReference type="ChEBI" id="CHEBI:57701"/>
        <dbReference type="EC" id="4.2.3.5"/>
    </reaction>
</comment>
<comment type="cofactor">
    <cofactor evidence="1">
        <name>FMNH2</name>
        <dbReference type="ChEBI" id="CHEBI:57618"/>
    </cofactor>
    <text evidence="1">Reduced FMN (FMNH(2)).</text>
</comment>
<comment type="pathway">
    <text evidence="1">Metabolic intermediate biosynthesis; chorismate biosynthesis; chorismate from D-erythrose 4-phosphate and phosphoenolpyruvate: step 7/7.</text>
</comment>
<comment type="subunit">
    <text evidence="1">Homotetramer.</text>
</comment>
<comment type="similarity">
    <text evidence="1">Belongs to the chorismate synthase family.</text>
</comment>
<name>AROC2_BACAN</name>
<protein>
    <recommendedName>
        <fullName evidence="1">Chorismate synthase 2</fullName>
        <shortName evidence="1">CS 2</shortName>
        <ecNumber evidence="1">4.2.3.5</ecNumber>
    </recommendedName>
    <alternativeName>
        <fullName evidence="1">5-enolpyruvylshikimate-3-phosphate phospholyase 2</fullName>
    </alternativeName>
</protein>